<reference key="1">
    <citation type="journal article" date="1995" name="Microbiology">
        <title>Characterization of a nitrogen-fixation (nif) gene cluster from Anabaena azollae 1a shows that closely related cyanobacteria have highly variable but structured intergenic regions.</title>
        <authorList>
            <person name="Jackman D.M."/>
            <person name="Mulligan M.E."/>
        </authorList>
    </citation>
    <scope>NUCLEOTIDE SEQUENCE [GENOMIC DNA]</scope>
    <source>
        <strain>1a</strain>
    </source>
</reference>
<sequence>MSVIYLDNNATTKVDPEVVEAIMPYLTDYYGNPSSMHTFGGQLGKAVRTAREQVAALLGADESEIVFTSCGTEGDNAAIRAALLAQPEKRHIITTQVEHPAVLNVCKQLETQGYTVTYLSVNGHGQLDLDELEASLTGNTALVTIMYANNETGTVFPIEEIGKRVKERGAIFHVDAVQAVGKIPLNMKTSTIDMLTISGHKIHAPKGIGALYVRRGVRFRPLLIGGHQERGRRAGTENVPGIVGLGKAAELELIHIETAIKKETRLRDRLEQTLLAKIPDCEVNGDVTQRLPNTTNIGFKYIEGEAILLSLNKYGICASSGSACTSGSLEPSHVLRAMGLPYTTLHGSIRFSLCRYTTEAQIDRVIEVMPEIVERLRALSPFKNDEAGWLQAQEQTLAHR</sequence>
<name>NIFS_TRIAZ</name>
<keyword id="KW-0408">Iron</keyword>
<keyword id="KW-0411">Iron-sulfur</keyword>
<keyword id="KW-0479">Metal-binding</keyword>
<keyword id="KW-0535">Nitrogen fixation</keyword>
<keyword id="KW-0663">Pyridoxal phosphate</keyword>
<keyword id="KW-0808">Transferase</keyword>
<gene>
    <name evidence="2" type="primary">nifS</name>
</gene>
<dbReference type="EC" id="2.8.1.7" evidence="2"/>
<dbReference type="EMBL" id="L34879">
    <property type="protein sequence ID" value="AAA87249.1"/>
    <property type="molecule type" value="Genomic_DNA"/>
</dbReference>
<dbReference type="SMR" id="Q43884"/>
<dbReference type="GO" id="GO:0031071">
    <property type="term" value="F:cysteine desulfurase activity"/>
    <property type="evidence" value="ECO:0007669"/>
    <property type="project" value="UniProtKB-EC"/>
</dbReference>
<dbReference type="GO" id="GO:0051536">
    <property type="term" value="F:iron-sulfur cluster binding"/>
    <property type="evidence" value="ECO:0007669"/>
    <property type="project" value="UniProtKB-KW"/>
</dbReference>
<dbReference type="GO" id="GO:0046872">
    <property type="term" value="F:metal ion binding"/>
    <property type="evidence" value="ECO:0007669"/>
    <property type="project" value="UniProtKB-KW"/>
</dbReference>
<dbReference type="GO" id="GO:0030170">
    <property type="term" value="F:pyridoxal phosphate binding"/>
    <property type="evidence" value="ECO:0007669"/>
    <property type="project" value="InterPro"/>
</dbReference>
<dbReference type="GO" id="GO:0006520">
    <property type="term" value="P:amino acid metabolic process"/>
    <property type="evidence" value="ECO:0007669"/>
    <property type="project" value="InterPro"/>
</dbReference>
<dbReference type="GO" id="GO:0009399">
    <property type="term" value="P:nitrogen fixation"/>
    <property type="evidence" value="ECO:0007669"/>
    <property type="project" value="UniProtKB-KW"/>
</dbReference>
<dbReference type="FunFam" id="3.40.640.10:FF:000084">
    <property type="entry name" value="IscS-like cysteine desulfurase"/>
    <property type="match status" value="1"/>
</dbReference>
<dbReference type="Gene3D" id="1.10.260.50">
    <property type="match status" value="1"/>
</dbReference>
<dbReference type="Gene3D" id="3.90.1150.10">
    <property type="entry name" value="Aspartate Aminotransferase, domain 1"/>
    <property type="match status" value="1"/>
</dbReference>
<dbReference type="Gene3D" id="3.40.640.10">
    <property type="entry name" value="Type I PLP-dependent aspartate aminotransferase-like (Major domain)"/>
    <property type="match status" value="1"/>
</dbReference>
<dbReference type="InterPro" id="IPR000192">
    <property type="entry name" value="Aminotrans_V_dom"/>
</dbReference>
<dbReference type="InterPro" id="IPR020578">
    <property type="entry name" value="Aminotrans_V_PyrdxlP_BS"/>
</dbReference>
<dbReference type="InterPro" id="IPR017772">
    <property type="entry name" value="Cys_deSase_NifS_bac/arc"/>
</dbReference>
<dbReference type="InterPro" id="IPR016454">
    <property type="entry name" value="Cysteine_dSase"/>
</dbReference>
<dbReference type="InterPro" id="IPR015424">
    <property type="entry name" value="PyrdxlP-dep_Trfase"/>
</dbReference>
<dbReference type="InterPro" id="IPR015421">
    <property type="entry name" value="PyrdxlP-dep_Trfase_major"/>
</dbReference>
<dbReference type="InterPro" id="IPR015422">
    <property type="entry name" value="PyrdxlP-dep_Trfase_small"/>
</dbReference>
<dbReference type="NCBIfam" id="TIGR03402">
    <property type="entry name" value="FeS_nifS"/>
    <property type="match status" value="1"/>
</dbReference>
<dbReference type="NCBIfam" id="NF002806">
    <property type="entry name" value="PRK02948.1"/>
    <property type="match status" value="1"/>
</dbReference>
<dbReference type="PANTHER" id="PTHR11601:SF34">
    <property type="entry name" value="CYSTEINE DESULFURASE"/>
    <property type="match status" value="1"/>
</dbReference>
<dbReference type="PANTHER" id="PTHR11601">
    <property type="entry name" value="CYSTEINE DESULFURYLASE FAMILY MEMBER"/>
    <property type="match status" value="1"/>
</dbReference>
<dbReference type="Pfam" id="PF00266">
    <property type="entry name" value="Aminotran_5"/>
    <property type="match status" value="1"/>
</dbReference>
<dbReference type="PIRSF" id="PIRSF005572">
    <property type="entry name" value="NifS"/>
    <property type="match status" value="1"/>
</dbReference>
<dbReference type="SUPFAM" id="SSF53383">
    <property type="entry name" value="PLP-dependent transferases"/>
    <property type="match status" value="1"/>
</dbReference>
<dbReference type="PROSITE" id="PS00595">
    <property type="entry name" value="AA_TRANSFER_CLASS_5"/>
    <property type="match status" value="1"/>
</dbReference>
<accession>Q43884</accession>
<comment type="function">
    <text evidence="2">Catalyzes the removal of elemental sulfur atoms from cysteine to produce alanine. Seems to participate in the biosynthesis of the nitrogenase metalloclusters by providing the inorganic sulfur required for the Fe-S core formation.</text>
</comment>
<comment type="catalytic activity">
    <reaction evidence="2">
        <text>(sulfur carrier)-H + L-cysteine = (sulfur carrier)-SH + L-alanine</text>
        <dbReference type="Rhea" id="RHEA:43892"/>
        <dbReference type="Rhea" id="RHEA-COMP:14737"/>
        <dbReference type="Rhea" id="RHEA-COMP:14739"/>
        <dbReference type="ChEBI" id="CHEBI:29917"/>
        <dbReference type="ChEBI" id="CHEBI:35235"/>
        <dbReference type="ChEBI" id="CHEBI:57972"/>
        <dbReference type="ChEBI" id="CHEBI:64428"/>
        <dbReference type="EC" id="2.8.1.7"/>
    </reaction>
</comment>
<comment type="cofactor">
    <cofactor evidence="2">
        <name>pyridoxal 5'-phosphate</name>
        <dbReference type="ChEBI" id="CHEBI:597326"/>
    </cofactor>
</comment>
<comment type="subunit">
    <text evidence="2">Homodimer.</text>
</comment>
<comment type="similarity">
    <text evidence="4">Belongs to the class-V pyridoxal-phosphate-dependent aminotransferase family. NifS/IscS subfamily.</text>
</comment>
<feature type="chain" id="PRO_0000150246" description="Cysteine desulfurase">
    <location>
        <begin position="1"/>
        <end position="400"/>
    </location>
</feature>
<feature type="active site" description="Cysteine persulfide intermediate" evidence="2">
    <location>
        <position position="324"/>
    </location>
</feature>
<feature type="binding site" evidence="3">
    <location>
        <begin position="71"/>
        <end position="72"/>
    </location>
    <ligand>
        <name>pyridoxal 5'-phosphate</name>
        <dbReference type="ChEBI" id="CHEBI:597326"/>
    </ligand>
</feature>
<feature type="binding site" evidence="1">
    <location>
        <position position="150"/>
    </location>
    <ligand>
        <name>pyridoxal 5'-phosphate</name>
        <dbReference type="ChEBI" id="CHEBI:597326"/>
    </ligand>
</feature>
<feature type="binding site" evidence="3">
    <location>
        <position position="178"/>
    </location>
    <ligand>
        <name>pyridoxal 5'-phosphate</name>
        <dbReference type="ChEBI" id="CHEBI:597326"/>
    </ligand>
</feature>
<feature type="binding site" evidence="3">
    <location>
        <begin position="198"/>
        <end position="200"/>
    </location>
    <ligand>
        <name>pyridoxal 5'-phosphate</name>
        <dbReference type="ChEBI" id="CHEBI:597326"/>
    </ligand>
</feature>
<feature type="binding site" evidence="3">
    <location>
        <position position="236"/>
    </location>
    <ligand>
        <name>pyridoxal 5'-phosphate</name>
        <dbReference type="ChEBI" id="CHEBI:597326"/>
    </ligand>
</feature>
<feature type="binding site" description="via persulfide group" evidence="1">
    <location>
        <position position="324"/>
    </location>
    <ligand>
        <name>[2Fe-2S] cluster</name>
        <dbReference type="ChEBI" id="CHEBI:190135"/>
    </ligand>
</feature>
<feature type="modified residue" description="N6-(pyridoxal phosphate)lysine" evidence="3">
    <location>
        <position position="201"/>
    </location>
</feature>
<proteinExistence type="inferred from homology"/>
<evidence type="ECO:0000250" key="1">
    <source>
        <dbReference type="UniProtKB" id="O29689"/>
    </source>
</evidence>
<evidence type="ECO:0000250" key="2">
    <source>
        <dbReference type="UniProtKB" id="P05341"/>
    </source>
</evidence>
<evidence type="ECO:0000250" key="3">
    <source>
        <dbReference type="UniProtKB" id="P0A6B9"/>
    </source>
</evidence>
<evidence type="ECO:0000305" key="4"/>
<organism>
    <name type="scientific">Trichormus azollae</name>
    <name type="common">Anabaena azollae</name>
    <dbReference type="NCBI Taxonomy" id="1164"/>
    <lineage>
        <taxon>Bacteria</taxon>
        <taxon>Bacillati</taxon>
        <taxon>Cyanobacteriota</taxon>
        <taxon>Cyanophyceae</taxon>
        <taxon>Nostocales</taxon>
        <taxon>Nostocaceae</taxon>
        <taxon>Trichormus</taxon>
    </lineage>
</organism>
<protein>
    <recommendedName>
        <fullName evidence="2">Cysteine desulfurase</fullName>
        <ecNumber evidence="2">2.8.1.7</ecNumber>
    </recommendedName>
    <alternativeName>
        <fullName evidence="2">Nitrogenase metalloclusters biosynthesis protein NifS</fullName>
    </alternativeName>
</protein>